<reference key="1">
    <citation type="journal article" date="1993" name="Nucleic Acids Res.">
        <title>The human hnRNP M proteins: identification of a methionine/arginine-rich repeat motif in ribonucleoproteins.</title>
        <authorList>
            <person name="Datar K.V."/>
            <person name="Dreyfuss G."/>
            <person name="Swanson M.S."/>
        </authorList>
    </citation>
    <scope>NUCLEOTIDE SEQUENCE [MRNA] (ISOFORMS 1; 2 AND 3)</scope>
</reference>
<reference key="2">
    <citation type="journal article" date="1996" name="Nucleic Acids Res.">
        <title>The human hnRNP-M proteins: structure and relation with early heat shock-induced splicing arrest and chromosome mapping.</title>
        <authorList>
            <person name="Gattoni R."/>
            <person name="Mahe D."/>
            <person name="Mahl P."/>
            <person name="Fischer N."/>
            <person name="Mattei M.-G."/>
            <person name="Stevenin J."/>
            <person name="Fuchs J.-P."/>
        </authorList>
    </citation>
    <scope>NUCLEOTIDE SEQUENCE [MRNA] (ISOFORM 2)</scope>
</reference>
<reference key="3">
    <citation type="submission" date="1998-04" db="EMBL/GenBank/DDBJ databases">
        <title>A new human M4 protein with deletion.</title>
        <authorList>
            <person name="Zhao Z."/>
            <person name="Huang X."/>
            <person name="Li N."/>
            <person name="Cao X."/>
        </authorList>
    </citation>
    <scope>NUCLEOTIDE SEQUENCE [MRNA] (ISOFORM 2)</scope>
</reference>
<reference key="4">
    <citation type="journal article" date="2004" name="Genome Res.">
        <title>The status, quality, and expansion of the NIH full-length cDNA project: the Mammalian Gene Collection (MGC).</title>
        <authorList>
            <consortium name="The MGC Project Team"/>
        </authorList>
    </citation>
    <scope>NUCLEOTIDE SEQUENCE [LARGE SCALE MRNA] (ISOFORM 1)</scope>
    <source>
        <tissue>Brain</tissue>
        <tissue>Lymph</tissue>
        <tissue>Placenta</tissue>
    </source>
</reference>
<reference key="5">
    <citation type="submission" date="2004-10" db="UniProtKB">
        <authorList>
            <person name="Bienvenut W.V."/>
        </authorList>
    </citation>
    <scope>PROTEIN SEQUENCE OF 2-17; 73-83; 222-232; 372-381; 404-410; 497-503; 518-524 AND 628-650</scope>
    <scope>CLEAVAGE OF INITIATOR METHIONINE</scope>
    <scope>ACETYLATION AT ALA-2</scope>
    <scope>SUBCELLULAR LOCATION</scope>
    <scope>IDENTIFICATION BY MASS SPECTROMETRY</scope>
    <source>
        <tissue>Cervix carcinoma</tissue>
    </source>
</reference>
<reference key="6">
    <citation type="journal article" date="2002" name="RNA">
        <title>Purification and characterization of native spliceosomes suitable for three-dimensional structural analysis.</title>
        <authorList>
            <person name="Jurica M.S."/>
            <person name="Licklider L.J."/>
            <person name="Gygi S.P."/>
            <person name="Grigorieff N."/>
            <person name="Moore M.J."/>
        </authorList>
    </citation>
    <scope>IDENTIFICATION BY MASS SPECTROMETRY</scope>
    <scope>IDENTIFICATION IN THE SPLICEOSOMAL C COMPLEX</scope>
</reference>
<reference key="7">
    <citation type="journal article" date="2003" name="Nature">
        <title>Proteomic characterization of the human centrosome by protein correlation profiling.</title>
        <authorList>
            <person name="Andersen J.S."/>
            <person name="Wilkinson C.J."/>
            <person name="Mayor T."/>
            <person name="Mortensen P."/>
            <person name="Nigg E.A."/>
            <person name="Mann M."/>
        </authorList>
    </citation>
    <scope>IDENTIFICATION BY MASS SPECTROMETRY</scope>
    <source>
        <tissue>Lymphoblast</tissue>
    </source>
</reference>
<reference key="8">
    <citation type="journal article" date="2005" name="J. Biol. Chem.">
        <title>Systematic identification and analysis of mammalian small ubiquitin-like modifier substrates.</title>
        <authorList>
            <person name="Gocke C.B."/>
            <person name="Yu H."/>
            <person name="Kang J."/>
        </authorList>
    </citation>
    <scope>SUMOYLATION</scope>
</reference>
<reference key="9">
    <citation type="journal article" date="2006" name="Cell">
        <title>Global, in vivo, and site-specific phosphorylation dynamics in signaling networks.</title>
        <authorList>
            <person name="Olsen J.V."/>
            <person name="Blagoev B."/>
            <person name="Gnad F."/>
            <person name="Macek B."/>
            <person name="Kumar C."/>
            <person name="Mortensen P."/>
            <person name="Mann M."/>
        </authorList>
    </citation>
    <scope>PHOSPHORYLATION [LARGE SCALE ANALYSIS] AT SER-618 AND SER-701</scope>
    <scope>IDENTIFICATION BY MASS SPECTROMETRY [LARGE SCALE ANALYSIS]</scope>
    <source>
        <tissue>Cervix carcinoma</tissue>
    </source>
</reference>
<reference key="10">
    <citation type="journal article" date="2008" name="Mol. Cell">
        <title>Kinase-selective enrichment enables quantitative phosphoproteomics of the kinome across the cell cycle.</title>
        <authorList>
            <person name="Daub H."/>
            <person name="Olsen J.V."/>
            <person name="Bairlein M."/>
            <person name="Gnad F."/>
            <person name="Oppermann F.S."/>
            <person name="Korner R."/>
            <person name="Greff Z."/>
            <person name="Keri G."/>
            <person name="Stemmann O."/>
            <person name="Mann M."/>
        </authorList>
    </citation>
    <scope>PHOSPHORYLATION [LARGE SCALE ANALYSIS] AT SER-575; SER-588; SER-618 AND SER-701</scope>
    <scope>IDENTIFICATION BY MASS SPECTROMETRY [LARGE SCALE ANALYSIS]</scope>
    <source>
        <tissue>Cervix carcinoma</tissue>
    </source>
</reference>
<reference key="11">
    <citation type="journal article" date="2008" name="Proc. Natl. Acad. Sci. U.S.A.">
        <title>A quantitative atlas of mitotic phosphorylation.</title>
        <authorList>
            <person name="Dephoure N."/>
            <person name="Zhou C."/>
            <person name="Villen J."/>
            <person name="Beausoleil S.A."/>
            <person name="Bakalarski C.E."/>
            <person name="Elledge S.J."/>
            <person name="Gygi S.P."/>
        </authorList>
    </citation>
    <scope>PHOSPHORYLATION [LARGE SCALE ANALYSIS] AT SER-468; SER-633 AND SER-637</scope>
    <scope>IDENTIFICATION BY MASS SPECTROMETRY [LARGE SCALE ANALYSIS]</scope>
    <source>
        <tissue>Cervix carcinoma</tissue>
    </source>
</reference>
<reference key="12">
    <citation type="journal article" date="2009" name="Anal. Chem.">
        <title>Lys-N and trypsin cover complementary parts of the phosphoproteome in a refined SCX-based approach.</title>
        <authorList>
            <person name="Gauci S."/>
            <person name="Helbig A.O."/>
            <person name="Slijper M."/>
            <person name="Krijgsveld J."/>
            <person name="Heck A.J."/>
            <person name="Mohammed S."/>
        </authorList>
    </citation>
    <scope>ACETYLATION [LARGE SCALE ANALYSIS] AT ALA-2</scope>
    <scope>CLEAVAGE OF INITIATOR METHIONINE [LARGE SCALE ANALYSIS]</scope>
    <scope>IDENTIFICATION BY MASS SPECTROMETRY [LARGE SCALE ANALYSIS]</scope>
</reference>
<reference key="13">
    <citation type="journal article" date="2009" name="Sci. Signal.">
        <title>Quantitative phosphoproteomic analysis of T cell receptor signaling reveals system-wide modulation of protein-protein interactions.</title>
        <authorList>
            <person name="Mayya V."/>
            <person name="Lundgren D.H."/>
            <person name="Hwang S.-I."/>
            <person name="Rezaul K."/>
            <person name="Wu L."/>
            <person name="Eng J.K."/>
            <person name="Rodionov V."/>
            <person name="Han D.K."/>
        </authorList>
    </citation>
    <scope>PHOSPHORYLATION [LARGE SCALE ANALYSIS] AT SER-618</scope>
    <scope>IDENTIFICATION BY MASS SPECTROMETRY [LARGE SCALE ANALYSIS]</scope>
    <source>
        <tissue>Leukemic T-cell</tissue>
    </source>
</reference>
<reference key="14">
    <citation type="journal article" date="2009" name="Science">
        <title>Lysine acetylation targets protein complexes and co-regulates major cellular functions.</title>
        <authorList>
            <person name="Choudhary C."/>
            <person name="Kumar C."/>
            <person name="Gnad F."/>
            <person name="Nielsen M.L."/>
            <person name="Rehman M."/>
            <person name="Walther T.C."/>
            <person name="Olsen J.V."/>
            <person name="Mann M."/>
        </authorList>
    </citation>
    <scope>ACETYLATION [LARGE SCALE ANALYSIS] AT LYS-277 AND LYS-698</scope>
    <scope>IDENTIFICATION BY MASS SPECTROMETRY [LARGE SCALE ANALYSIS]</scope>
</reference>
<reference key="15">
    <citation type="journal article" date="2010" name="Sci. Signal.">
        <title>Quantitative phosphoproteomics reveals widespread full phosphorylation site occupancy during mitosis.</title>
        <authorList>
            <person name="Olsen J.V."/>
            <person name="Vermeulen M."/>
            <person name="Santamaria A."/>
            <person name="Kumar C."/>
            <person name="Miller M.L."/>
            <person name="Jensen L.J."/>
            <person name="Gnad F."/>
            <person name="Cox J."/>
            <person name="Jensen T.S."/>
            <person name="Nigg E.A."/>
            <person name="Brunak S."/>
            <person name="Mann M."/>
        </authorList>
    </citation>
    <scope>PHOSPHORYLATION [LARGE SCALE ANALYSIS] AT SER-575; SER-588; SER-618 AND SER-701</scope>
    <scope>IDENTIFICATION BY MASS SPECTROMETRY [LARGE SCALE ANALYSIS]</scope>
    <source>
        <tissue>Cervix carcinoma</tissue>
    </source>
</reference>
<reference key="16">
    <citation type="journal article" date="2011" name="BMC Syst. Biol.">
        <title>Initial characterization of the human central proteome.</title>
        <authorList>
            <person name="Burkard T.R."/>
            <person name="Planyavsky M."/>
            <person name="Kaupe I."/>
            <person name="Breitwieser F.P."/>
            <person name="Buerckstuemmer T."/>
            <person name="Bennett K.L."/>
            <person name="Superti-Furga G."/>
            <person name="Colinge J."/>
        </authorList>
    </citation>
    <scope>IDENTIFICATION BY MASS SPECTROMETRY [LARGE SCALE ANALYSIS]</scope>
</reference>
<reference key="17">
    <citation type="journal article" date="2011" name="Sci. Signal.">
        <title>System-wide temporal characterization of the proteome and phosphoproteome of human embryonic stem cell differentiation.</title>
        <authorList>
            <person name="Rigbolt K.T."/>
            <person name="Prokhorova T.A."/>
            <person name="Akimov V."/>
            <person name="Henningsen J."/>
            <person name="Johansen P.T."/>
            <person name="Kratchmarova I."/>
            <person name="Kassem M."/>
            <person name="Mann M."/>
            <person name="Olsen J.V."/>
            <person name="Blagoev B."/>
        </authorList>
    </citation>
    <scope>PHOSPHORYLATION [LARGE SCALE ANALYSIS] AT SER-29; SER-432; SER-452; SER-481; SER-528; SER-575; SER-588; SER-618 AND SER-701</scope>
    <scope>IDENTIFICATION BY MASS SPECTROMETRY [LARGE SCALE ANALYSIS]</scope>
</reference>
<reference key="18">
    <citation type="journal article" date="2012" name="Mol. Cell. Proteomics">
        <title>Comparative large-scale characterisation of plant vs. mammal proteins reveals similar and idiosyncratic N-alpha acetylation features.</title>
        <authorList>
            <person name="Bienvenut W.V."/>
            <person name="Sumpton D."/>
            <person name="Martinez A."/>
            <person name="Lilla S."/>
            <person name="Espagne C."/>
            <person name="Meinnel T."/>
            <person name="Giglione C."/>
        </authorList>
    </citation>
    <scope>ACETYLATION [LARGE SCALE ANALYSIS] AT ALA-2</scope>
    <scope>CLEAVAGE OF INITIATOR METHIONINE [LARGE SCALE ANALYSIS]</scope>
    <scope>IDENTIFICATION BY MASS SPECTROMETRY [LARGE SCALE ANALYSIS]</scope>
</reference>
<reference key="19">
    <citation type="journal article" date="2013" name="J. Proteome Res.">
        <title>Toward a comprehensive characterization of a human cancer cell phosphoproteome.</title>
        <authorList>
            <person name="Zhou H."/>
            <person name="Di Palma S."/>
            <person name="Preisinger C."/>
            <person name="Peng M."/>
            <person name="Polat A.N."/>
            <person name="Heck A.J."/>
            <person name="Mohammed S."/>
        </authorList>
    </citation>
    <scope>PHOSPHORYLATION [LARGE SCALE ANALYSIS] AT SER-29; SER-86; SER-204; SER-365; SER-377; SER-397; SER-432; SER-468; SER-575; SER-588; SER-618; SER-633; SER-637; THR-665 AND SER-701</scope>
    <scope>IDENTIFICATION BY MASS SPECTROMETRY [LARGE SCALE ANALYSIS]</scope>
    <source>
        <tissue>Cervix carcinoma</tissue>
        <tissue>Erythroleukemia</tissue>
    </source>
</reference>
<reference key="20">
    <citation type="journal article" date="2014" name="J. Proteomics">
        <title>An enzyme assisted RP-RPLC approach for in-depth analysis of human liver phosphoproteome.</title>
        <authorList>
            <person name="Bian Y."/>
            <person name="Song C."/>
            <person name="Cheng K."/>
            <person name="Dong M."/>
            <person name="Wang F."/>
            <person name="Huang J."/>
            <person name="Sun D."/>
            <person name="Wang L."/>
            <person name="Ye M."/>
            <person name="Zou H."/>
        </authorList>
    </citation>
    <scope>PHOSPHORYLATION [LARGE SCALE ANALYSIS] AT SER-365; SER-397; SER-618; SER-633 AND SER-637</scope>
    <scope>IDENTIFICATION BY MASS SPECTROMETRY [LARGE SCALE ANALYSIS]</scope>
    <source>
        <tissue>Liver</tissue>
    </source>
</reference>
<reference key="21">
    <citation type="journal article" date="2014" name="Mol. Cell. Proteomics">
        <title>Immunoaffinity enrichment and mass spectrometry analysis of protein methylation.</title>
        <authorList>
            <person name="Guo A."/>
            <person name="Gu H."/>
            <person name="Zhou J."/>
            <person name="Mulhern D."/>
            <person name="Wang Y."/>
            <person name="Lee K.A."/>
            <person name="Yang V."/>
            <person name="Aguiar M."/>
            <person name="Kornhauser J."/>
            <person name="Jia X."/>
            <person name="Ren J."/>
            <person name="Beausoleil S.A."/>
            <person name="Silva J.C."/>
            <person name="Vemulapalli V."/>
            <person name="Bedford M.T."/>
            <person name="Comb M.J."/>
        </authorList>
    </citation>
    <scope>METHYLATION [LARGE SCALE ANALYSIS] AT ARG-496</scope>
    <scope>IDENTIFICATION BY MASS SPECTROMETRY [LARGE SCALE ANALYSIS]</scope>
    <source>
        <tissue>Colon carcinoma</tissue>
    </source>
</reference>
<reference key="22">
    <citation type="journal article" date="2014" name="Nat. Struct. Mol. Biol.">
        <title>Uncovering global SUMOylation signaling networks in a site-specific manner.</title>
        <authorList>
            <person name="Hendriks I.A."/>
            <person name="D'Souza R.C."/>
            <person name="Yang B."/>
            <person name="Verlaan-de Vries M."/>
            <person name="Mann M."/>
            <person name="Vertegaal A.C."/>
        </authorList>
    </citation>
    <scope>SUMOYLATION [LARGE SCALE ANALYSIS] AT LYS-17; LYS-83; LYS-145; LYS-388; LYS-685 AND LYS-698</scope>
    <scope>IDENTIFICATION BY MASS SPECTROMETRY [LARGE SCALE ANALYSIS]</scope>
</reference>
<reference key="23">
    <citation type="journal article" date="2014" name="Proc. Natl. Acad. Sci. U.S.A.">
        <title>Mapping of SUMO sites and analysis of SUMOylation changes induced by external stimuli.</title>
        <authorList>
            <person name="Impens F."/>
            <person name="Radoshevich L."/>
            <person name="Cossart P."/>
            <person name="Ribet D."/>
        </authorList>
    </citation>
    <scope>SUMOYLATION [LARGE SCALE ANALYSIS] AT LYS-698</scope>
    <scope>IDENTIFICATION BY MASS SPECTROMETRY [LARGE SCALE ANALYSIS]</scope>
</reference>
<reference key="24">
    <citation type="journal article" date="2015" name="Brain">
        <title>Peptidylprolyl isomerase A governs TARDBP function and assembly in heterogeneous nuclear ribonucleoprotein complexes.</title>
        <authorList>
            <person name="Lauranzano E."/>
            <person name="Pozzi S."/>
            <person name="Pasetto L."/>
            <person name="Stucchi R."/>
            <person name="Massignan T."/>
            <person name="Paolella K."/>
            <person name="Mombrini M."/>
            <person name="Nardo G."/>
            <person name="Lunetta C."/>
            <person name="Corbo M."/>
            <person name="Mora G."/>
            <person name="Bendotti C."/>
            <person name="Bonetto V."/>
        </authorList>
    </citation>
    <scope>INTERACTION WITH PPIA</scope>
</reference>
<reference key="25">
    <citation type="journal article" date="2015" name="Cell Rep.">
        <title>SUMO-2 orchestrates chromatin modifiers in response to DNA damage.</title>
        <authorList>
            <person name="Hendriks I.A."/>
            <person name="Treffers L.W."/>
            <person name="Verlaan-de Vries M."/>
            <person name="Olsen J.V."/>
            <person name="Vertegaal A.C."/>
        </authorList>
    </citation>
    <scope>SUMOYLATION [LARGE SCALE ANALYSIS] AT LYS-17; LYS-83; LYS-145 AND LYS-698</scope>
    <scope>IDENTIFICATION BY MASS SPECTROMETRY [LARGE SCALE ANALYSIS]</scope>
</reference>
<reference key="26">
    <citation type="journal article" date="2015" name="Mol. Cell. Proteomics">
        <title>System-wide analysis of SUMOylation dynamics in response to replication stress reveals novel small ubiquitin-like modified target proteins and acceptor lysines relevant for genome stability.</title>
        <authorList>
            <person name="Xiao Z."/>
            <person name="Chang J.G."/>
            <person name="Hendriks I.A."/>
            <person name="Sigurdsson J.O."/>
            <person name="Olsen J.V."/>
            <person name="Vertegaal A.C."/>
        </authorList>
    </citation>
    <scope>SUMOYLATION [LARGE SCALE ANALYSIS] AT LYS-145 AND LYS-698</scope>
    <scope>IDENTIFICATION BY MASS SPECTROMETRY [LARGE SCALE ANALYSIS]</scope>
</reference>
<reference key="27">
    <citation type="journal article" date="2015" name="Proteomics">
        <title>N-terminome analysis of the human mitochondrial proteome.</title>
        <authorList>
            <person name="Vaca Jacome A.S."/>
            <person name="Rabilloud T."/>
            <person name="Schaeffer-Reiss C."/>
            <person name="Rompais M."/>
            <person name="Ayoub D."/>
            <person name="Lane L."/>
            <person name="Bairoch A."/>
            <person name="Van Dorsselaer A."/>
            <person name="Carapito C."/>
        </authorList>
    </citation>
    <scope>IDENTIFICATION BY MASS SPECTROMETRY [LARGE SCALE ANALYSIS]</scope>
</reference>
<reference key="28">
    <citation type="journal article" date="2017" name="Nat. Struct. Mol. Biol.">
        <title>Site-specific mapping of the human SUMO proteome reveals co-modification with phosphorylation.</title>
        <authorList>
            <person name="Hendriks I.A."/>
            <person name="Lyon D."/>
            <person name="Young C."/>
            <person name="Jensen L.J."/>
            <person name="Vertegaal A.C."/>
            <person name="Nielsen M.L."/>
        </authorList>
    </citation>
    <scope>SUMOYLATION [LARGE SCALE ANALYSIS] AT LYS-17; LYS-37; LYS-69; LYS-83; LYS-88; LYS-127; LYS-134; LYS-143; LYS-145; LYS-221; LYS-277; LYS-285; LYS-345; LYS-381; LYS-388; LYS-651; LYS-667; LYS-685; LYS-692; LYS-698 AND LYS-716</scope>
    <scope>IDENTIFICATION BY MASS SPECTROMETRY [LARGE SCALE ANALYSIS]</scope>
</reference>
<reference key="29">
    <citation type="submission" date="2006-10" db="PDB data bank">
        <title>Solution structure of the RNA binding domains of heterogeneous nuclear ribonucleoprotein M.</title>
        <authorList>
            <consortium name="RIKEN structural genomics initiative (RSGI)"/>
        </authorList>
    </citation>
    <scope>STRUCTURE BY NMR OF 196-296 AND 652-730</scope>
</reference>
<comment type="function">
    <text>Pre-mRNA binding protein in vivo, binds avidly to poly(G) and poly(U) RNA homopolymers in vitro. Involved in splicing. Acts as a receptor for carcinoembryonic antigen in Kupffer cells, may initiate a series of signaling events leading to tyrosine phosphorylation of proteins and induction of IL-1 alpha, IL-6, IL-10 and tumor necrosis factor alpha cytokines.</text>
</comment>
<comment type="subunit">
    <text evidence="4 6">Identified in the spliceosome C complex (PubMed:11991638). Interacts with PPIA/CYPA (PubMed:25678563).</text>
</comment>
<comment type="interaction">
    <interactant intactId="EBI-486809">
        <id>P52272</id>
    </interactant>
    <interactant intactId="EBI-9641546">
        <id>Q99996-2</id>
        <label>AKAP9</label>
    </interactant>
    <organismsDiffer>false</organismsDiffer>
    <experiments>3</experiments>
</comment>
<comment type="interaction">
    <interactant intactId="EBI-486809">
        <id>P52272</id>
    </interactant>
    <interactant intactId="EBI-374880">
        <id>Q99459</id>
        <label>CDC5L</label>
    </interactant>
    <organismsDiffer>false</organismsDiffer>
    <experiments>7</experiments>
</comment>
<comment type="interaction">
    <interactant intactId="EBI-486809">
        <id>P52272</id>
    </interactant>
    <interactant intactId="EBI-745707">
        <id>Q8NEA9</id>
        <label>GMCL2</label>
    </interactant>
    <organismsDiffer>false</organismsDiffer>
    <experiments>3</experiments>
</comment>
<comment type="interaction">
    <interactant intactId="EBI-486809">
        <id>P52272</id>
    </interactant>
    <interactant intactId="EBI-740220">
        <id>O14964</id>
        <label>HGS</label>
    </interactant>
    <organismsDiffer>false</organismsDiffer>
    <experiments>3</experiments>
</comment>
<comment type="interaction">
    <interactant intactId="EBI-486809">
        <id>P52272</id>
    </interactant>
    <interactant intactId="EBI-299649">
        <id>P22626</id>
        <label>HNRNPA2B1</label>
    </interactant>
    <organismsDiffer>false</organismsDiffer>
    <experiments>2</experiments>
</comment>
<comment type="interaction">
    <interactant intactId="EBI-486809">
        <id>P52272</id>
    </interactant>
    <interactant intactId="EBI-352986">
        <id>P52597</id>
        <label>HNRNPF</label>
    </interactant>
    <organismsDiffer>false</organismsDiffer>
    <experiments>6</experiments>
</comment>
<comment type="interaction">
    <interactant intactId="EBI-486809">
        <id>P52272</id>
    </interactant>
    <interactant intactId="EBI-351590">
        <id>P31943</id>
        <label>HNRNPH1</label>
    </interactant>
    <organismsDiffer>false</organismsDiffer>
    <experiments>4</experiments>
</comment>
<comment type="interaction">
    <interactant intactId="EBI-486809">
        <id>P52272</id>
    </interactant>
    <interactant intactId="EBI-739546">
        <id>Q96PV6</id>
        <label>LENG8</label>
    </interactant>
    <organismsDiffer>false</organismsDiffer>
    <experiments>3</experiments>
</comment>
<comment type="interaction">
    <interactant intactId="EBI-486809">
        <id>P52272</id>
    </interactant>
    <interactant intactId="EBI-8639312">
        <id>P25800</id>
        <label>LMO1</label>
    </interactant>
    <organismsDiffer>false</organismsDiffer>
    <experiments>3</experiments>
</comment>
<comment type="interaction">
    <interactant intactId="EBI-486809">
        <id>P52272</id>
    </interactant>
    <interactant intactId="EBI-739696">
        <id>P25791</id>
        <label>LMO2</label>
    </interactant>
    <organismsDiffer>false</organismsDiffer>
    <experiments>4</experiments>
</comment>
<comment type="interaction">
    <interactant intactId="EBI-486809">
        <id>P52272</id>
    </interactant>
    <interactant intactId="EBI-11959475">
        <id>P25791-3</id>
        <label>LMO2</label>
    </interactant>
    <organismsDiffer>false</organismsDiffer>
    <experiments>3</experiments>
</comment>
<comment type="interaction">
    <interactant intactId="EBI-486809">
        <id>P52272</id>
    </interactant>
    <interactant intactId="EBI-1045155">
        <id>P43360</id>
        <label>MAGEA6</label>
    </interactant>
    <organismsDiffer>false</organismsDiffer>
    <experiments>3</experiments>
</comment>
<comment type="interaction">
    <interactant intactId="EBI-486809">
        <id>P52272</id>
    </interactant>
    <interactant intactId="EBI-1051504">
        <id>O43660</id>
        <label>PLRG1</label>
    </interactant>
    <organismsDiffer>false</organismsDiffer>
    <experiments>5</experiments>
</comment>
<comment type="interaction">
    <interactant intactId="EBI-486809">
        <id>P52272</id>
    </interactant>
    <interactant intactId="EBI-750487">
        <id>Q8WW24</id>
        <label>TEKT4</label>
    </interactant>
    <organismsDiffer>false</organismsDiffer>
    <experiments>3</experiments>
</comment>
<comment type="interaction">
    <interactant intactId="EBI-486809">
        <id>P52272</id>
    </interactant>
    <interactant intactId="EBI-286693">
        <id>Q92973</id>
        <label>TNPO1</label>
    </interactant>
    <organismsDiffer>false</organismsDiffer>
    <experiments>3</experiments>
</comment>
<comment type="interaction">
    <interactant intactId="EBI-486809">
        <id>P52272</id>
    </interactant>
    <interactant intactId="EBI-359224">
        <id>Q13077</id>
        <label>TRAF1</label>
    </interactant>
    <organismsDiffer>false</organismsDiffer>
    <experiments>3</experiments>
</comment>
<comment type="interaction">
    <interactant intactId="EBI-486809">
        <id>P52272</id>
    </interactant>
    <interactant intactId="EBI-744794">
        <id>Q9BZW7</id>
        <label>TSGA10</label>
    </interactant>
    <organismsDiffer>false</organismsDiffer>
    <experiments>3</experiments>
</comment>
<comment type="interaction">
    <interactant intactId="EBI-486809">
        <id>P52272</id>
    </interactant>
    <interactant intactId="EBI-1185167">
        <id>Q8AZK7</id>
        <label>EBNA-LP</label>
    </interactant>
    <organismsDiffer>true</organismsDiffer>
    <experiments>2</experiments>
</comment>
<comment type="subcellular location">
    <subcellularLocation>
        <location evidence="7">Nucleus</location>
        <location evidence="7">Nucleolus</location>
    </subcellularLocation>
</comment>
<comment type="alternative products">
    <event type="alternative splicing"/>
    <isoform>
        <id>P52272-1</id>
        <name>1</name>
        <name>M4</name>
        <sequence type="displayed"/>
    </isoform>
    <isoform>
        <id>P52272-2</id>
        <name>2</name>
        <name>M1-M2</name>
        <sequence type="described" ref="VSP_005845"/>
    </isoform>
    <isoform>
        <id>P52272-3</id>
        <name>3</name>
        <name>M3</name>
        <sequence type="not described"/>
    </isoform>
    <text>Experimental confirmation may be lacking for some isoforms.</text>
</comment>
<comment type="PTM">
    <text evidence="5">Sumoylated.</text>
</comment>
<gene>
    <name type="primary">HNRNPM</name>
    <name type="synonym">HNRPM</name>
    <name type="synonym">NAGR1</name>
</gene>
<accession>P52272</accession>
<accession>Q15584</accession>
<accession>Q8WZ44</accession>
<accession>Q96H56</accession>
<accession>Q9BWL9</accession>
<accession>Q9Y492</accession>
<organism>
    <name type="scientific">Homo sapiens</name>
    <name type="common">Human</name>
    <dbReference type="NCBI Taxonomy" id="9606"/>
    <lineage>
        <taxon>Eukaryota</taxon>
        <taxon>Metazoa</taxon>
        <taxon>Chordata</taxon>
        <taxon>Craniata</taxon>
        <taxon>Vertebrata</taxon>
        <taxon>Euteleostomi</taxon>
        <taxon>Mammalia</taxon>
        <taxon>Eutheria</taxon>
        <taxon>Euarchontoglires</taxon>
        <taxon>Primates</taxon>
        <taxon>Haplorrhini</taxon>
        <taxon>Catarrhini</taxon>
        <taxon>Hominidae</taxon>
        <taxon>Homo</taxon>
    </lineage>
</organism>
<keyword id="KW-0002">3D-structure</keyword>
<keyword id="KW-0007">Acetylation</keyword>
<keyword id="KW-0025">Alternative splicing</keyword>
<keyword id="KW-0903">Direct protein sequencing</keyword>
<keyword id="KW-1017">Isopeptide bond</keyword>
<keyword id="KW-0488">Methylation</keyword>
<keyword id="KW-0507">mRNA processing</keyword>
<keyword id="KW-0508">mRNA splicing</keyword>
<keyword id="KW-0539">Nucleus</keyword>
<keyword id="KW-0597">Phosphoprotein</keyword>
<keyword id="KW-1267">Proteomics identification</keyword>
<keyword id="KW-1185">Reference proteome</keyword>
<keyword id="KW-0677">Repeat</keyword>
<keyword id="KW-0687">Ribonucleoprotein</keyword>
<keyword id="KW-0694">RNA-binding</keyword>
<keyword id="KW-0747">Spliceosome</keyword>
<keyword id="KW-0832">Ubl conjugation</keyword>
<proteinExistence type="evidence at protein level"/>
<evidence type="ECO:0000250" key="1">
    <source>
        <dbReference type="UniProtKB" id="Q9D0E1"/>
    </source>
</evidence>
<evidence type="ECO:0000255" key="2">
    <source>
        <dbReference type="PROSITE-ProRule" id="PRU00176"/>
    </source>
</evidence>
<evidence type="ECO:0000256" key="3">
    <source>
        <dbReference type="SAM" id="MobiDB-lite"/>
    </source>
</evidence>
<evidence type="ECO:0000269" key="4">
    <source>
    </source>
</evidence>
<evidence type="ECO:0000269" key="5">
    <source>
    </source>
</evidence>
<evidence type="ECO:0000269" key="6">
    <source>
    </source>
</evidence>
<evidence type="ECO:0000269" key="7">
    <source ref="5"/>
</evidence>
<evidence type="ECO:0000303" key="8">
    <source>
    </source>
</evidence>
<evidence type="ECO:0000303" key="9">
    <source>
    </source>
</evidence>
<evidence type="ECO:0000303" key="10">
    <source ref="3"/>
</evidence>
<evidence type="ECO:0000305" key="11"/>
<evidence type="ECO:0007744" key="12">
    <source>
    </source>
</evidence>
<evidence type="ECO:0007744" key="13">
    <source>
    </source>
</evidence>
<evidence type="ECO:0007744" key="14">
    <source>
    </source>
</evidence>
<evidence type="ECO:0007744" key="15">
    <source>
    </source>
</evidence>
<evidence type="ECO:0007744" key="16">
    <source>
    </source>
</evidence>
<evidence type="ECO:0007744" key="17">
    <source>
    </source>
</evidence>
<evidence type="ECO:0007744" key="18">
    <source>
    </source>
</evidence>
<evidence type="ECO:0007744" key="19">
    <source>
    </source>
</evidence>
<evidence type="ECO:0007744" key="20">
    <source>
    </source>
</evidence>
<evidence type="ECO:0007744" key="21">
    <source>
    </source>
</evidence>
<evidence type="ECO:0007744" key="22">
    <source>
    </source>
</evidence>
<evidence type="ECO:0007744" key="23">
    <source>
    </source>
</evidence>
<evidence type="ECO:0007744" key="24">
    <source>
    </source>
</evidence>
<evidence type="ECO:0007744" key="25">
    <source>
    </source>
</evidence>
<evidence type="ECO:0007744" key="26">
    <source>
    </source>
</evidence>
<evidence type="ECO:0007744" key="27">
    <source>
    </source>
</evidence>
<evidence type="ECO:0007744" key="28">
    <source>
    </source>
</evidence>
<evidence type="ECO:0007829" key="29">
    <source>
        <dbReference type="PDB" id="2DGV"/>
    </source>
</evidence>
<evidence type="ECO:0007829" key="30">
    <source>
        <dbReference type="PDB" id="2DH9"/>
    </source>
</evidence>
<evidence type="ECO:0007829" key="31">
    <source>
        <dbReference type="PDB" id="2DO0"/>
    </source>
</evidence>
<dbReference type="EMBL" id="L03532">
    <property type="protein sequence ID" value="AAA36192.1"/>
    <property type="molecule type" value="mRNA"/>
</dbReference>
<dbReference type="EMBL" id="L32611">
    <property type="protein sequence ID" value="AAL31359.1"/>
    <property type="molecule type" value="mRNA"/>
</dbReference>
<dbReference type="EMBL" id="AF061832">
    <property type="protein sequence ID" value="AAC16002.1"/>
    <property type="molecule type" value="mRNA"/>
</dbReference>
<dbReference type="EMBL" id="BC000138">
    <property type="protein sequence ID" value="AAH00138.2"/>
    <property type="molecule type" value="mRNA"/>
</dbReference>
<dbReference type="EMBL" id="BC008895">
    <property type="protein sequence ID" value="AAH08895.2"/>
    <property type="molecule type" value="mRNA"/>
</dbReference>
<dbReference type="EMBL" id="BC019580">
    <property type="protein sequence ID" value="AAH19580.1"/>
    <property type="molecule type" value="mRNA"/>
</dbReference>
<dbReference type="CCDS" id="CCDS12203.1">
    <molecule id="P52272-1"/>
</dbReference>
<dbReference type="CCDS" id="CCDS12204.1">
    <molecule id="P52272-2"/>
</dbReference>
<dbReference type="PIR" id="S35532">
    <property type="entry name" value="S35532"/>
</dbReference>
<dbReference type="RefSeq" id="NP_005959.2">
    <molecule id="P52272-1"/>
    <property type="nucleotide sequence ID" value="NM_005968.4"/>
</dbReference>
<dbReference type="RefSeq" id="NP_112480.2">
    <molecule id="P52272-2"/>
    <property type="nucleotide sequence ID" value="NM_031203.4"/>
</dbReference>
<dbReference type="PDB" id="2DGV">
    <property type="method" value="NMR"/>
    <property type="chains" value="A=652-730"/>
</dbReference>
<dbReference type="PDB" id="2DH9">
    <property type="method" value="NMR"/>
    <property type="chains" value="A=655-730"/>
</dbReference>
<dbReference type="PDB" id="2DO0">
    <property type="method" value="NMR"/>
    <property type="chains" value="A=196-296"/>
</dbReference>
<dbReference type="PDB" id="2OT8">
    <property type="method" value="X-ray"/>
    <property type="resolution" value="3.10 A"/>
    <property type="chains" value="C/D=41-70"/>
</dbReference>
<dbReference type="PDBsum" id="2DGV"/>
<dbReference type="PDBsum" id="2DH9"/>
<dbReference type="PDBsum" id="2DO0"/>
<dbReference type="PDBsum" id="2OT8"/>
<dbReference type="SMR" id="P52272"/>
<dbReference type="BioGRID" id="110751">
    <property type="interactions" value="741"/>
</dbReference>
<dbReference type="CORUM" id="P52272"/>
<dbReference type="DIP" id="DIP-29336N"/>
<dbReference type="FunCoup" id="P52272">
    <property type="interactions" value="3148"/>
</dbReference>
<dbReference type="IntAct" id="P52272">
    <property type="interactions" value="200"/>
</dbReference>
<dbReference type="MINT" id="P52272"/>
<dbReference type="STRING" id="9606.ENSP00000325376"/>
<dbReference type="ChEMBL" id="CHEMBL5291610"/>
<dbReference type="GlyGen" id="P52272">
    <property type="glycosylation" value="1 site, 1 O-linked glycan (1 site)"/>
</dbReference>
<dbReference type="iPTMnet" id="P52272"/>
<dbReference type="MetOSite" id="P52272"/>
<dbReference type="PhosphoSitePlus" id="P52272"/>
<dbReference type="SwissPalm" id="P52272"/>
<dbReference type="BioMuta" id="HNRNPM"/>
<dbReference type="DMDM" id="55977747"/>
<dbReference type="REPRODUCTION-2DPAGE" id="IPI00383296"/>
<dbReference type="CPTAC" id="CPTAC-385"/>
<dbReference type="CPTAC" id="CPTAC-386"/>
<dbReference type="jPOST" id="P52272"/>
<dbReference type="MassIVE" id="P52272"/>
<dbReference type="PaxDb" id="9606-ENSP00000325376"/>
<dbReference type="PeptideAtlas" id="P52272"/>
<dbReference type="ProteomicsDB" id="56473">
    <molecule id="P52272-1"/>
</dbReference>
<dbReference type="ProteomicsDB" id="56474">
    <molecule id="P52272-2"/>
</dbReference>
<dbReference type="Pumba" id="P52272"/>
<dbReference type="Antibodypedia" id="4238">
    <property type="antibodies" value="497 antibodies from 34 providers"/>
</dbReference>
<dbReference type="DNASU" id="4670"/>
<dbReference type="Ensembl" id="ENST00000325495.9">
    <molecule id="P52272-1"/>
    <property type="protein sequence ID" value="ENSP00000325376.2"/>
    <property type="gene ID" value="ENSG00000099783.13"/>
</dbReference>
<dbReference type="Ensembl" id="ENST00000348943.7">
    <molecule id="P52272-2"/>
    <property type="protein sequence ID" value="ENSP00000325732.2"/>
    <property type="gene ID" value="ENSG00000099783.13"/>
</dbReference>
<dbReference type="GeneID" id="4670"/>
<dbReference type="KEGG" id="hsa:4670"/>
<dbReference type="MANE-Select" id="ENST00000325495.9">
    <property type="protein sequence ID" value="ENSP00000325376.2"/>
    <property type="RefSeq nucleotide sequence ID" value="NM_005968.5"/>
    <property type="RefSeq protein sequence ID" value="NP_005959.2"/>
</dbReference>
<dbReference type="UCSC" id="uc010dwd.4">
    <molecule id="P52272-1"/>
    <property type="organism name" value="human"/>
</dbReference>
<dbReference type="AGR" id="HGNC:5046"/>
<dbReference type="CTD" id="4670"/>
<dbReference type="DisGeNET" id="4670"/>
<dbReference type="GeneCards" id="HNRNPM"/>
<dbReference type="HGNC" id="HGNC:5046">
    <property type="gene designation" value="HNRNPM"/>
</dbReference>
<dbReference type="HPA" id="ENSG00000099783">
    <property type="expression patterns" value="Low tissue specificity"/>
</dbReference>
<dbReference type="MalaCards" id="HNRNPM"/>
<dbReference type="MIM" id="160994">
    <property type="type" value="gene"/>
</dbReference>
<dbReference type="neXtProt" id="NX_P52272"/>
<dbReference type="OpenTargets" id="ENSG00000099783"/>
<dbReference type="PharmGKB" id="PA29370"/>
<dbReference type="VEuPathDB" id="HostDB:ENSG00000099783"/>
<dbReference type="eggNOG" id="KOG4212">
    <property type="taxonomic scope" value="Eukaryota"/>
</dbReference>
<dbReference type="GeneTree" id="ENSGT00940000154595"/>
<dbReference type="HOGENOM" id="CLU_019566_1_0_1"/>
<dbReference type="InParanoid" id="P52272"/>
<dbReference type="OMA" id="SMFDRQM"/>
<dbReference type="OrthoDB" id="610462at2759"/>
<dbReference type="PAN-GO" id="P52272">
    <property type="GO annotations" value="6 GO annotations based on evolutionary models"/>
</dbReference>
<dbReference type="PhylomeDB" id="P52272"/>
<dbReference type="TreeFam" id="TF313406"/>
<dbReference type="PathwayCommons" id="P52272"/>
<dbReference type="Reactome" id="R-HSA-6803529">
    <property type="pathway name" value="FGFR2 alternative splicing"/>
</dbReference>
<dbReference type="Reactome" id="R-HSA-72163">
    <property type="pathway name" value="mRNA Splicing - Major Pathway"/>
</dbReference>
<dbReference type="Reactome" id="R-HSA-72203">
    <property type="pathway name" value="Processing of Capped Intron-Containing Pre-mRNA"/>
</dbReference>
<dbReference type="SignaLink" id="P52272"/>
<dbReference type="SIGNOR" id="P52272"/>
<dbReference type="BioGRID-ORCS" id="4670">
    <property type="hits" value="590 hits in 1184 CRISPR screens"/>
</dbReference>
<dbReference type="CD-CODE" id="232F8A39">
    <property type="entry name" value="P-body"/>
</dbReference>
<dbReference type="CD-CODE" id="91857CE7">
    <property type="entry name" value="Nucleolus"/>
</dbReference>
<dbReference type="CD-CODE" id="DEE660B4">
    <property type="entry name" value="Stress granule"/>
</dbReference>
<dbReference type="CD-CODE" id="FB4E32DD">
    <property type="entry name" value="Presynaptic clusters and postsynaptic densities"/>
</dbReference>
<dbReference type="ChiTaRS" id="HNRNPM">
    <property type="organism name" value="human"/>
</dbReference>
<dbReference type="EvolutionaryTrace" id="P52272"/>
<dbReference type="GenomeRNAi" id="4670"/>
<dbReference type="Pharos" id="P52272">
    <property type="development level" value="Tbio"/>
</dbReference>
<dbReference type="PRO" id="PR:P52272"/>
<dbReference type="Proteomes" id="UP000005640">
    <property type="component" value="Chromosome 19"/>
</dbReference>
<dbReference type="RNAct" id="P52272">
    <property type="molecule type" value="protein"/>
</dbReference>
<dbReference type="Bgee" id="ENSG00000099783">
    <property type="expression patterns" value="Expressed in tibia and 204 other cell types or tissues"/>
</dbReference>
<dbReference type="ExpressionAtlas" id="P52272">
    <property type="expression patterns" value="baseline and differential"/>
</dbReference>
<dbReference type="GO" id="GO:0071013">
    <property type="term" value="C:catalytic step 2 spliceosome"/>
    <property type="evidence" value="ECO:0000314"/>
    <property type="project" value="UniProtKB"/>
</dbReference>
<dbReference type="GO" id="GO:0062023">
    <property type="term" value="C:collagen-containing extracellular matrix"/>
    <property type="evidence" value="ECO:0007005"/>
    <property type="project" value="UniProtKB"/>
</dbReference>
<dbReference type="GO" id="GO:0070062">
    <property type="term" value="C:extracellular exosome"/>
    <property type="evidence" value="ECO:0007005"/>
    <property type="project" value="UniProtKB"/>
</dbReference>
<dbReference type="GO" id="GO:0016020">
    <property type="term" value="C:membrane"/>
    <property type="evidence" value="ECO:0007005"/>
    <property type="project" value="UniProtKB"/>
</dbReference>
<dbReference type="GO" id="GO:0016363">
    <property type="term" value="C:nuclear matrix"/>
    <property type="evidence" value="ECO:0000314"/>
    <property type="project" value="BHF-UCL"/>
</dbReference>
<dbReference type="GO" id="GO:0005730">
    <property type="term" value="C:nucleolus"/>
    <property type="evidence" value="ECO:0007669"/>
    <property type="project" value="UniProtKB-SubCell"/>
</dbReference>
<dbReference type="GO" id="GO:0005654">
    <property type="term" value="C:nucleoplasm"/>
    <property type="evidence" value="ECO:0000314"/>
    <property type="project" value="BHF-UCL"/>
</dbReference>
<dbReference type="GO" id="GO:0005634">
    <property type="term" value="C:nucleus"/>
    <property type="evidence" value="ECO:0000318"/>
    <property type="project" value="GO_Central"/>
</dbReference>
<dbReference type="GO" id="GO:0042382">
    <property type="term" value="C:paraspeckles"/>
    <property type="evidence" value="ECO:0000314"/>
    <property type="project" value="BHF-UCL"/>
</dbReference>
<dbReference type="GO" id="GO:0005681">
    <property type="term" value="C:spliceosomal complex"/>
    <property type="evidence" value="ECO:0000314"/>
    <property type="project" value="HGNC-UCL"/>
</dbReference>
<dbReference type="GO" id="GO:0045202">
    <property type="term" value="C:synapse"/>
    <property type="evidence" value="ECO:0007669"/>
    <property type="project" value="Ensembl"/>
</dbReference>
<dbReference type="GO" id="GO:0003729">
    <property type="term" value="F:mRNA binding"/>
    <property type="evidence" value="ECO:0000318"/>
    <property type="project" value="GO_Central"/>
</dbReference>
<dbReference type="GO" id="GO:0019904">
    <property type="term" value="F:protein domain specific binding"/>
    <property type="evidence" value="ECO:0000353"/>
    <property type="project" value="UniProtKB"/>
</dbReference>
<dbReference type="GO" id="GO:0003723">
    <property type="term" value="F:RNA binding"/>
    <property type="evidence" value="ECO:0007005"/>
    <property type="project" value="UniProtKB"/>
</dbReference>
<dbReference type="GO" id="GO:0000380">
    <property type="term" value="P:alternative mRNA splicing, via spliceosome"/>
    <property type="evidence" value="ECO:0000315"/>
    <property type="project" value="BHF-UCL"/>
</dbReference>
<dbReference type="GO" id="GO:0000398">
    <property type="term" value="P:mRNA splicing, via spliceosome"/>
    <property type="evidence" value="ECO:0000305"/>
    <property type="project" value="UniProtKB"/>
</dbReference>
<dbReference type="CDD" id="cd12657">
    <property type="entry name" value="RRM1_hnRNPM"/>
    <property type="match status" value="1"/>
</dbReference>
<dbReference type="CDD" id="cd12659">
    <property type="entry name" value="RRM2_hnRNPM"/>
    <property type="match status" value="1"/>
</dbReference>
<dbReference type="CDD" id="cd12661">
    <property type="entry name" value="RRM3_hnRNPM"/>
    <property type="match status" value="1"/>
</dbReference>
<dbReference type="DisProt" id="DP02015"/>
<dbReference type="FunFam" id="3.30.70.330:FF:000033">
    <property type="entry name" value="heterogeneous nuclear ribonucleoprotein M isoform X1"/>
    <property type="match status" value="1"/>
</dbReference>
<dbReference type="FunFam" id="3.30.70.330:FF:000034">
    <property type="entry name" value="heterogeneous nuclear ribonucleoprotein M isoform X1"/>
    <property type="match status" value="1"/>
</dbReference>
<dbReference type="FunFam" id="3.30.70.330:FF:000548">
    <property type="entry name" value="Myelin expression factor 2"/>
    <property type="match status" value="1"/>
</dbReference>
<dbReference type="Gene3D" id="3.30.70.330">
    <property type="match status" value="3"/>
</dbReference>
<dbReference type="IDEAL" id="IID00152"/>
<dbReference type="InterPro" id="IPR024666">
    <property type="entry name" value="HnRNP_M_PY-NLS"/>
</dbReference>
<dbReference type="InterPro" id="IPR034990">
    <property type="entry name" value="hnRNPM_RRM3"/>
</dbReference>
<dbReference type="InterPro" id="IPR012677">
    <property type="entry name" value="Nucleotide-bd_a/b_plait_sf"/>
</dbReference>
<dbReference type="InterPro" id="IPR035979">
    <property type="entry name" value="RBD_domain_sf"/>
</dbReference>
<dbReference type="InterPro" id="IPR000504">
    <property type="entry name" value="RRM_dom"/>
</dbReference>
<dbReference type="InterPro" id="IPR050374">
    <property type="entry name" value="RRT5_SRSF_SR"/>
</dbReference>
<dbReference type="PANTHER" id="PTHR23003">
    <property type="entry name" value="RNA RECOGNITION MOTIF RRM DOMAIN CONTAINING PROTEIN"/>
    <property type="match status" value="1"/>
</dbReference>
<dbReference type="Pfam" id="PF11532">
    <property type="entry name" value="HnRNP_M_NLS"/>
    <property type="match status" value="1"/>
</dbReference>
<dbReference type="Pfam" id="PF00076">
    <property type="entry name" value="RRM_1"/>
    <property type="match status" value="3"/>
</dbReference>
<dbReference type="SMART" id="SM00360">
    <property type="entry name" value="RRM"/>
    <property type="match status" value="3"/>
</dbReference>
<dbReference type="SUPFAM" id="SSF54928">
    <property type="entry name" value="RNA-binding domain, RBD"/>
    <property type="match status" value="3"/>
</dbReference>
<dbReference type="PROSITE" id="PS50102">
    <property type="entry name" value="RRM"/>
    <property type="match status" value="3"/>
</dbReference>
<protein>
    <recommendedName>
        <fullName>Heterogeneous nuclear ribonucleoprotein M</fullName>
        <shortName>hnRNP M</shortName>
    </recommendedName>
</protein>
<feature type="initiator methionine" description="Removed" evidence="7 15 20">
    <location>
        <position position="1"/>
    </location>
</feature>
<feature type="chain" id="PRO_0000081864" description="Heterogeneous nuclear ribonucleoprotein M">
    <location>
        <begin position="2"/>
        <end position="730"/>
    </location>
</feature>
<feature type="domain" description="RRM 1" evidence="2">
    <location>
        <begin position="71"/>
        <end position="149"/>
    </location>
</feature>
<feature type="domain" description="RRM 2" evidence="2">
    <location>
        <begin position="204"/>
        <end position="281"/>
    </location>
</feature>
<feature type="repeat" description="1">
    <location>
        <begin position="400"/>
        <end position="405"/>
    </location>
</feature>
<feature type="repeat" description="2">
    <location>
        <begin position="407"/>
        <end position="412"/>
    </location>
</feature>
<feature type="repeat" description="3">
    <location>
        <begin position="415"/>
        <end position="420"/>
    </location>
</feature>
<feature type="repeat" description="4">
    <location>
        <begin position="426"/>
        <end position="431"/>
    </location>
</feature>
<feature type="repeat" description="5">
    <location>
        <begin position="433"/>
        <end position="438"/>
    </location>
</feature>
<feature type="repeat" description="6">
    <location>
        <begin position="440"/>
        <end position="445"/>
    </location>
</feature>
<feature type="repeat" description="7">
    <location>
        <begin position="446"/>
        <end position="451"/>
    </location>
</feature>
<feature type="repeat" description="8">
    <location>
        <begin position="453"/>
        <end position="458"/>
    </location>
</feature>
<feature type="repeat" description="9">
    <location>
        <begin position="461"/>
        <end position="466"/>
    </location>
</feature>
<feature type="repeat" description="10">
    <location>
        <begin position="468"/>
        <end position="473"/>
    </location>
</feature>
<feature type="repeat" description="11">
    <location>
        <begin position="475"/>
        <end position="480"/>
    </location>
</feature>
<feature type="repeat" description="12">
    <location>
        <begin position="482"/>
        <end position="487"/>
    </location>
</feature>
<feature type="repeat" description="13">
    <location>
        <begin position="493"/>
        <end position="498"/>
    </location>
</feature>
<feature type="repeat" description="14">
    <location>
        <begin position="500"/>
        <end position="505"/>
    </location>
</feature>
<feature type="repeat" description="15">
    <location>
        <begin position="507"/>
        <end position="512"/>
    </location>
</feature>
<feature type="repeat" description="16">
    <location>
        <begin position="514"/>
        <end position="519"/>
    </location>
</feature>
<feature type="repeat" description="17">
    <location>
        <begin position="521"/>
        <end position="526"/>
    </location>
</feature>
<feature type="repeat" description="18">
    <location>
        <begin position="528"/>
        <end position="533"/>
    </location>
</feature>
<feature type="repeat" description="19">
    <location>
        <begin position="540"/>
        <end position="545"/>
    </location>
</feature>
<feature type="repeat" description="20">
    <location>
        <begin position="547"/>
        <end position="552"/>
    </location>
</feature>
<feature type="repeat" description="21">
    <location>
        <begin position="554"/>
        <end position="559"/>
    </location>
</feature>
<feature type="repeat" description="22">
    <location>
        <begin position="562"/>
        <end position="566"/>
    </location>
</feature>
<feature type="repeat" description="23">
    <location>
        <begin position="567"/>
        <end position="572"/>
    </location>
</feature>
<feature type="repeat" description="24">
    <location>
        <begin position="575"/>
        <end position="579"/>
    </location>
</feature>
<feature type="repeat" description="25">
    <location>
        <begin position="580"/>
        <end position="585"/>
    </location>
</feature>
<feature type="repeat" description="26">
    <location>
        <begin position="588"/>
        <end position="593"/>
    </location>
</feature>
<feature type="repeat" description="27">
    <location>
        <begin position="603"/>
        <end position="608"/>
    </location>
</feature>
<feature type="domain" description="RRM 3" evidence="2">
    <location>
        <begin position="653"/>
        <end position="729"/>
    </location>
</feature>
<feature type="region of interest" description="Disordered" evidence="3">
    <location>
        <begin position="1"/>
        <end position="62"/>
    </location>
</feature>
<feature type="region of interest" description="27 X 6 AA repeats of [GEVSTPAN]-[ILMV]-[DE]-[RH]-[MLVI]-[GAV]">
    <location>
        <begin position="400"/>
        <end position="608"/>
    </location>
</feature>
<feature type="compositionally biased region" description="Low complexity" evidence="3">
    <location>
        <begin position="1"/>
        <end position="13"/>
    </location>
</feature>
<feature type="compositionally biased region" description="Basic and acidic residues" evidence="3">
    <location>
        <begin position="38"/>
        <end position="50"/>
    </location>
</feature>
<feature type="modified residue" description="N-acetylalanine" evidence="7 15 20">
    <location>
        <position position="2"/>
    </location>
</feature>
<feature type="modified residue" description="Phosphoserine" evidence="19 21">
    <location>
        <position position="29"/>
    </location>
</feature>
<feature type="modified residue" description="Phosphoserine" evidence="21">
    <location>
        <position position="86"/>
    </location>
</feature>
<feature type="modified residue" description="N6-acetyllysine; alternate" evidence="1">
    <location>
        <position position="134"/>
    </location>
</feature>
<feature type="modified residue" description="Phosphoserine" evidence="21">
    <location>
        <position position="204"/>
    </location>
</feature>
<feature type="modified residue" description="N6-acetyllysine; alternate" evidence="16">
    <location>
        <position position="277"/>
    </location>
</feature>
<feature type="modified residue" description="Phosphoserine" evidence="21 23">
    <location>
        <position position="365"/>
    </location>
</feature>
<feature type="modified residue" description="Phosphoserine" evidence="21">
    <location>
        <position position="377"/>
    </location>
</feature>
<feature type="modified residue" description="Phosphoserine" evidence="21 23">
    <location>
        <position position="397"/>
    </location>
</feature>
<feature type="modified residue" description="Phosphoserine" evidence="19 21">
    <location>
        <position position="432"/>
    </location>
</feature>
<feature type="modified residue" description="Phosphoserine" evidence="19">
    <location>
        <position position="452"/>
    </location>
</feature>
<feature type="modified residue" description="Phosphoserine" evidence="13 21">
    <location>
        <position position="468"/>
    </location>
</feature>
<feature type="modified residue" description="Phosphoserine" evidence="19">
    <location>
        <position position="481"/>
    </location>
</feature>
<feature type="modified residue" description="Omega-N-methylarginine" evidence="22">
    <location>
        <position position="496"/>
    </location>
</feature>
<feature type="modified residue" description="Phosphoserine" evidence="19">
    <location>
        <position position="528"/>
    </location>
</feature>
<feature type="modified residue" description="Phosphoserine" evidence="14 18 19 21">
    <location>
        <position position="575"/>
    </location>
</feature>
<feature type="modified residue" description="Phosphoserine" evidence="14 18 19 21">
    <location>
        <position position="588"/>
    </location>
</feature>
<feature type="modified residue" description="Phosphoserine" evidence="12 14 17 18 19 21 23">
    <location>
        <position position="618"/>
    </location>
</feature>
<feature type="modified residue" description="Phosphoserine" evidence="13 21 23">
    <location>
        <position position="633"/>
    </location>
</feature>
<feature type="modified residue" description="Phosphoserine" evidence="13 21 23">
    <location>
        <position position="637"/>
    </location>
</feature>
<feature type="modified residue" description="Phosphothreonine" evidence="21">
    <location>
        <position position="665"/>
    </location>
</feature>
<feature type="modified residue" description="N6-acetyllysine" evidence="1">
    <location>
        <position position="672"/>
    </location>
</feature>
<feature type="modified residue" description="N6-acetyllysine; alternate" evidence="16">
    <location>
        <position position="698"/>
    </location>
</feature>
<feature type="modified residue" description="Phosphoserine" evidence="12 14 18 19 21">
    <location>
        <position position="701"/>
    </location>
</feature>
<feature type="cross-link" description="Glycyl lysine isopeptide (Lys-Gly) (interchain with G-Cter in SUMO2)" evidence="25 27 28">
    <location>
        <position position="17"/>
    </location>
</feature>
<feature type="cross-link" description="Glycyl lysine isopeptide (Lys-Gly) (interchain with G-Cter in SUMO2)" evidence="28">
    <location>
        <position position="37"/>
    </location>
</feature>
<feature type="cross-link" description="Glycyl lysine isopeptide (Lys-Gly) (interchain with G-Cter in SUMO2)" evidence="28">
    <location>
        <position position="69"/>
    </location>
</feature>
<feature type="cross-link" description="Glycyl lysine isopeptide (Lys-Gly) (interchain with G-Cter in SUMO2)" evidence="25 27 28">
    <location>
        <position position="83"/>
    </location>
</feature>
<feature type="cross-link" description="Glycyl lysine isopeptide (Lys-Gly) (interchain with G-Cter in SUMO2)" evidence="28">
    <location>
        <position position="88"/>
    </location>
</feature>
<feature type="cross-link" description="Glycyl lysine isopeptide (Lys-Gly) (interchain with G-Cter in SUMO2)" evidence="28">
    <location>
        <position position="127"/>
    </location>
</feature>
<feature type="cross-link" description="Glycyl lysine isopeptide (Lys-Gly) (interchain with G-Cter in SUMO2); alternate" evidence="28">
    <location>
        <position position="134"/>
    </location>
</feature>
<feature type="cross-link" description="Glycyl lysine isopeptide (Lys-Gly) (interchain with G-Cter in SUMO2)" evidence="28">
    <location>
        <position position="143"/>
    </location>
</feature>
<feature type="cross-link" description="Glycyl lysine isopeptide (Lys-Gly) (interchain with G-Cter in SUMO2)" evidence="25 26 27 28">
    <location>
        <position position="145"/>
    </location>
</feature>
<feature type="cross-link" description="Glycyl lysine isopeptide (Lys-Gly) (interchain with G-Cter in SUMO2)" evidence="28">
    <location>
        <position position="221"/>
    </location>
</feature>
<feature type="cross-link" description="Glycyl lysine isopeptide (Lys-Gly) (interchain with G-Cter in SUMO2); alternate" evidence="28">
    <location>
        <position position="277"/>
    </location>
</feature>
<feature type="cross-link" description="Glycyl lysine isopeptide (Lys-Gly) (interchain with G-Cter in SUMO2)" evidence="28">
    <location>
        <position position="285"/>
    </location>
</feature>
<feature type="cross-link" description="Glycyl lysine isopeptide (Lys-Gly) (interchain with G-Cter in SUMO2)" evidence="28">
    <location>
        <position position="345"/>
    </location>
</feature>
<feature type="cross-link" description="Glycyl lysine isopeptide (Lys-Gly) (interchain with G-Cter in SUMO2)" evidence="28">
    <location>
        <position position="381"/>
    </location>
</feature>
<feature type="cross-link" description="Glycyl lysine isopeptide (Lys-Gly) (interchain with G-Cter in SUMO2)" evidence="25 28">
    <location>
        <position position="388"/>
    </location>
</feature>
<feature type="cross-link" description="Glycyl lysine isopeptide (Lys-Gly) (interchain with G-Cter in SUMO2)" evidence="28">
    <location>
        <position position="651"/>
    </location>
</feature>
<feature type="cross-link" description="Glycyl lysine isopeptide (Lys-Gly) (interchain with G-Cter in SUMO2)" evidence="28">
    <location>
        <position position="667"/>
    </location>
</feature>
<feature type="cross-link" description="Glycyl lysine isopeptide (Lys-Gly) (interchain with G-Cter in SUMO2)" evidence="25 28">
    <location>
        <position position="685"/>
    </location>
</feature>
<feature type="cross-link" description="Glycyl lysine isopeptide (Lys-Gly) (interchain with G-Cter in SUMO2)" evidence="28">
    <location>
        <position position="692"/>
    </location>
</feature>
<feature type="cross-link" description="Glycyl lysine isopeptide (Lys-Gly) (interchain with G-Cter in SUMO1); alternate" evidence="24">
    <location>
        <position position="698"/>
    </location>
</feature>
<feature type="cross-link" description="Glycyl lysine isopeptide (Lys-Gly) (interchain with G-Cter in SUMO2); alternate" evidence="24 25 26 27 28">
    <location>
        <position position="698"/>
    </location>
</feature>
<feature type="cross-link" description="Glycyl lysine isopeptide (Lys-Gly) (interchain with G-Cter in SUMO2)" evidence="28">
    <location>
        <position position="716"/>
    </location>
</feature>
<feature type="splice variant" id="VSP_005845" description="In isoform 2." evidence="8 9 10">
    <location>
        <begin position="160"/>
        <end position="198"/>
    </location>
</feature>
<feature type="sequence conflict" description="In Ref. 1; AAA36192." evidence="11" ref="1">
    <original>APGVPSGNGAP</original>
    <variation>GPACERQRGS</variation>
    <location>
        <begin position="24"/>
        <end position="34"/>
    </location>
</feature>
<feature type="sequence conflict" description="In Ref. 3; AAC16002." evidence="11" ref="3">
    <original>P</original>
    <variation>S</variation>
    <location>
        <position position="34"/>
    </location>
</feature>
<feature type="sequence conflict" description="In Ref. 1; AAA36192." evidence="11" ref="1">
    <original>E</original>
    <variation>V</variation>
    <location>
        <position position="51"/>
    </location>
</feature>
<feature type="sequence conflict" description="In Ref. 3; AAC16002." evidence="11" ref="3">
    <original>H</original>
    <variation>C</variation>
    <location>
        <position position="152"/>
    </location>
</feature>
<feature type="sequence conflict" description="In Ref. 1 and 3." evidence="11" ref="1 3">
    <original>L</original>
    <variation>P</variation>
    <location>
        <position position="527"/>
    </location>
</feature>
<feature type="strand" evidence="31">
    <location>
        <begin position="206"/>
        <end position="210"/>
    </location>
</feature>
<feature type="helix" evidence="31">
    <location>
        <begin position="217"/>
        <end position="224"/>
    </location>
</feature>
<feature type="turn" evidence="31">
    <location>
        <begin position="225"/>
        <end position="227"/>
    </location>
</feature>
<feature type="strand" evidence="31">
    <location>
        <begin position="230"/>
        <end position="237"/>
    </location>
</feature>
<feature type="strand" evidence="31">
    <location>
        <begin position="242"/>
        <end position="253"/>
    </location>
</feature>
<feature type="helix" evidence="31">
    <location>
        <begin position="254"/>
        <end position="264"/>
    </location>
</feature>
<feature type="strand" evidence="31">
    <location>
        <begin position="275"/>
        <end position="278"/>
    </location>
</feature>
<feature type="strand" evidence="29">
    <location>
        <begin position="654"/>
        <end position="657"/>
    </location>
</feature>
<feature type="helix" evidence="29">
    <location>
        <begin position="666"/>
        <end position="674"/>
    </location>
</feature>
<feature type="strand" evidence="29">
    <location>
        <begin position="679"/>
        <end position="689"/>
    </location>
</feature>
<feature type="strand" evidence="29">
    <location>
        <begin position="691"/>
        <end position="701"/>
    </location>
</feature>
<feature type="helix" evidence="29">
    <location>
        <begin position="702"/>
        <end position="712"/>
    </location>
</feature>
<feature type="strand" evidence="30">
    <location>
        <begin position="725"/>
        <end position="727"/>
    </location>
</feature>
<name>HNRPM_HUMAN</name>
<sequence length="730" mass="77516">MAAGVEAAAEVAATEIKMEEESGAPGVPSGNGAPGPKGEGERPAQNEKRKEKNIKRGGNRFEPYANPTKRYRAFITNIPFDVKWQSLKDLVKEKVGEVTYVELLMDAEGKSRGCAVVEFKMEESMKKAAEVLNKHSLSGRPLKVKEDPDGEHARRAMQKVMATTGGMGMGPGGPGMITIPPSILNNPNIPNEIIHALQAGRLGSTVFVANLDYKVGWKKLKEVFSMAGVVVRADILEDKDGKSRGIGTVTFEQSIEAVQAISMFNGQLLFDRPMHVKMDERALPKGDFFPPERPQQLPHGLGGIGMGLGPGGQPIDANHLNKGIGMGNIGPAGMGMEGIGFGINKMGGMEGPFGGGMENMGRFGSGMNMGRINEILSNALKRGEIIAKQGGGGGGGSVPGIERMGPGIDRLGGAGMERMGAGLGHGMDRVGSEIERMGLVMDRMGSVERMGSGIERMGPLGLDHMASSIERMGQTMERIGSGVERMGAGMGFGLERMAAPIDRVGQTIERMGSGVERMGPAIERMGLSMERMVPAGMGAGLERMGPVMDRMATGLERMGANNLERMGLERMGANSLERMGLERMGANSLERMGPAMGPALGAGIERMGLAMGGGGGASFDRAIEMERGNFGGSFAGSFGGAGGHAPGVARKACQIFVRNLPFDFTWKMLKDKFNECGHVLYADIKMENGKSKGCGVVKFESPEVAERACRMMNGMKLSGREIDVRIDRNA</sequence>